<reference key="1">
    <citation type="journal article" date="1999" name="Plant Cell">
        <title>The complete mitochondrial DNA sequences of Nephroselmis olivacea and Pedinomonas minor: two radically different evolutionary patterns within the green algae.</title>
        <authorList>
            <person name="Turmel M."/>
            <person name="Lemieux C."/>
            <person name="Burger G."/>
            <person name="Lang B.F."/>
            <person name="Otis C."/>
            <person name="Plante I."/>
            <person name="Gray M.W."/>
        </authorList>
    </citation>
    <scope>NUCLEOTIDE SEQUENCE [GENOMIC DNA]</scope>
    <source>
        <strain>NIES-484 / S-N-5-8</strain>
    </source>
</reference>
<evidence type="ECO:0000250" key="1"/>
<evidence type="ECO:0000255" key="2"/>
<evidence type="ECO:0000305" key="3"/>
<feature type="chain" id="PRO_0000118584" description="NADH dehydrogenase [ubiquinone] iron-sulfur protein 2">
    <location>
        <begin position="1"/>
        <end position="398"/>
    </location>
</feature>
<feature type="binding site" evidence="2">
    <location>
        <position position="261"/>
    </location>
    <ligand>
        <name>[4Fe-4S] cluster</name>
        <dbReference type="ChEBI" id="CHEBI:49883"/>
    </ligand>
</feature>
<feature type="binding site" evidence="2">
    <location>
        <position position="267"/>
    </location>
    <ligand>
        <name>[4Fe-4S] cluster</name>
        <dbReference type="ChEBI" id="CHEBI:49883"/>
    </ligand>
</feature>
<feature type="binding site" evidence="2">
    <location>
        <position position="282"/>
    </location>
    <ligand>
        <name>[4Fe-4S] cluster</name>
        <dbReference type="ChEBI" id="CHEBI:49883"/>
    </ligand>
</feature>
<protein>
    <recommendedName>
        <fullName>NADH dehydrogenase [ubiquinone] iron-sulfur protein 2</fullName>
        <ecNumber>7.1.1.2</ecNumber>
    </recommendedName>
    <alternativeName>
        <fullName>NADH dehydrogenase subunit 7</fullName>
    </alternativeName>
</protein>
<name>NDUS2_NEPOL</name>
<sequence>MAIEHASSIKKVKNFTLNFGPQHPAAHGVLRLVLELNGEVVARADPHIGLLHRGTEKLIEYKTYTQALPYFDRLDYVSMMCQEHAYSLAVEKLLHCEVPERAQYIRVLFSEITRILNHLLALTTHAMDVGALTPFLWAFEEREKLIEFYERVSGSRMHAAYIRPGGVACDLPANLCEDIYLFCQQFASRIDEMEEMLTNNRIWKQRLVDIGIVTAENAFAWGFSGVLLRGSGVAWDLRKTQPYDVYNRMIFDVPVGTQGDCYDRYLCRVEEMRQSIHIIMQCLNQLPKGMIKADDKKITPPSRSQMKQSMESLIHHFKLFTEGYTVPNSETYTSVEAPKGEFGVYLVSNGTNRPYRCKIRAPGFLHLQGLDMMSKNHMLADVVTIIGTQDIVFGEVDR</sequence>
<comment type="function">
    <text evidence="1">Core subunit of the mitochondrial membrane respiratory chain NADH dehydrogenase (Complex I) that is believed to belong to the minimal assembly required for catalysis. Complex I functions in the transfer of electrons from NADH to the respiratory chain. The immediate electron acceptor for the enzyme is believed to be ubiquinone (By similarity). Component of the iron-sulfur (IP) fragment of the enzyme (By similarity).</text>
</comment>
<comment type="catalytic activity">
    <reaction>
        <text>a ubiquinone + NADH + 5 H(+)(in) = a ubiquinol + NAD(+) + 4 H(+)(out)</text>
        <dbReference type="Rhea" id="RHEA:29091"/>
        <dbReference type="Rhea" id="RHEA-COMP:9565"/>
        <dbReference type="Rhea" id="RHEA-COMP:9566"/>
        <dbReference type="ChEBI" id="CHEBI:15378"/>
        <dbReference type="ChEBI" id="CHEBI:16389"/>
        <dbReference type="ChEBI" id="CHEBI:17976"/>
        <dbReference type="ChEBI" id="CHEBI:57540"/>
        <dbReference type="ChEBI" id="CHEBI:57945"/>
        <dbReference type="EC" id="7.1.1.2"/>
    </reaction>
</comment>
<comment type="cofactor">
    <cofactor evidence="1">
        <name>[4Fe-4S] cluster</name>
        <dbReference type="ChEBI" id="CHEBI:49883"/>
    </cofactor>
    <text evidence="1">Binds 1 [4Fe-4S] cluster.</text>
</comment>
<comment type="subunit">
    <text evidence="1">Complex I is composed of about 45 different subunits. This is a component of the iron-sulfur (IP) fragment of the enzyme (By similarity).</text>
</comment>
<comment type="subcellular location">
    <subcellularLocation>
        <location>Mitochondrion</location>
    </subcellularLocation>
</comment>
<comment type="similarity">
    <text evidence="3">Belongs to the complex I 49 kDa subunit family.</text>
</comment>
<gene>
    <name type="primary">NAD7</name>
</gene>
<accession>Q9TC96</accession>
<proteinExistence type="inferred from homology"/>
<dbReference type="EC" id="7.1.1.2"/>
<dbReference type="EMBL" id="AF110138">
    <property type="protein sequence ID" value="AAF03201.1"/>
    <property type="molecule type" value="Genomic_DNA"/>
</dbReference>
<dbReference type="RefSeq" id="YP_665674.1">
    <property type="nucleotide sequence ID" value="NC_008239.1"/>
</dbReference>
<dbReference type="SMR" id="Q9TC96"/>
<dbReference type="GeneID" id="4178038"/>
<dbReference type="GO" id="GO:0005739">
    <property type="term" value="C:mitochondrion"/>
    <property type="evidence" value="ECO:0007669"/>
    <property type="project" value="UniProtKB-SubCell"/>
</dbReference>
<dbReference type="GO" id="GO:0051539">
    <property type="term" value="F:4 iron, 4 sulfur cluster binding"/>
    <property type="evidence" value="ECO:0007669"/>
    <property type="project" value="UniProtKB-KW"/>
</dbReference>
<dbReference type="GO" id="GO:0046872">
    <property type="term" value="F:metal ion binding"/>
    <property type="evidence" value="ECO:0007669"/>
    <property type="project" value="UniProtKB-KW"/>
</dbReference>
<dbReference type="GO" id="GO:0051287">
    <property type="term" value="F:NAD binding"/>
    <property type="evidence" value="ECO:0007669"/>
    <property type="project" value="InterPro"/>
</dbReference>
<dbReference type="GO" id="GO:0008137">
    <property type="term" value="F:NADH dehydrogenase (ubiquinone) activity"/>
    <property type="evidence" value="ECO:0007669"/>
    <property type="project" value="UniProtKB-EC"/>
</dbReference>
<dbReference type="GO" id="GO:0048038">
    <property type="term" value="F:quinone binding"/>
    <property type="evidence" value="ECO:0007669"/>
    <property type="project" value="InterPro"/>
</dbReference>
<dbReference type="GO" id="GO:0006120">
    <property type="term" value="P:mitochondrial electron transport, NADH to ubiquinone"/>
    <property type="evidence" value="ECO:0007669"/>
    <property type="project" value="TreeGrafter"/>
</dbReference>
<dbReference type="FunFam" id="1.10.645.10:FF:000005">
    <property type="entry name" value="NADH-quinone oxidoreductase subunit D"/>
    <property type="match status" value="1"/>
</dbReference>
<dbReference type="Gene3D" id="1.10.645.10">
    <property type="entry name" value="Cytochrome-c3 Hydrogenase, chain B"/>
    <property type="match status" value="1"/>
</dbReference>
<dbReference type="HAMAP" id="MF_01358">
    <property type="entry name" value="NDH1_NuoD"/>
    <property type="match status" value="1"/>
</dbReference>
<dbReference type="InterPro" id="IPR001135">
    <property type="entry name" value="NADH_Q_OxRdtase_suD"/>
</dbReference>
<dbReference type="InterPro" id="IPR014029">
    <property type="entry name" value="NADH_UbQ_OxRdtase_49kDa_CS"/>
</dbReference>
<dbReference type="InterPro" id="IPR022885">
    <property type="entry name" value="NDH1_su_D/H"/>
</dbReference>
<dbReference type="InterPro" id="IPR029014">
    <property type="entry name" value="NiFe-Hase_large"/>
</dbReference>
<dbReference type="NCBIfam" id="TIGR01962">
    <property type="entry name" value="NuoD"/>
    <property type="match status" value="1"/>
</dbReference>
<dbReference type="NCBIfam" id="NF004739">
    <property type="entry name" value="PRK06075.1"/>
    <property type="match status" value="1"/>
</dbReference>
<dbReference type="PANTHER" id="PTHR11993:SF10">
    <property type="entry name" value="NADH DEHYDROGENASE [UBIQUINONE] IRON-SULFUR PROTEIN 2, MITOCHONDRIAL"/>
    <property type="match status" value="1"/>
</dbReference>
<dbReference type="PANTHER" id="PTHR11993">
    <property type="entry name" value="NADH-UBIQUINONE OXIDOREDUCTASE 49 KDA SUBUNIT"/>
    <property type="match status" value="1"/>
</dbReference>
<dbReference type="Pfam" id="PF00346">
    <property type="entry name" value="Complex1_49kDa"/>
    <property type="match status" value="1"/>
</dbReference>
<dbReference type="SUPFAM" id="SSF56762">
    <property type="entry name" value="HydB/Nqo4-like"/>
    <property type="match status" value="1"/>
</dbReference>
<dbReference type="PROSITE" id="PS00535">
    <property type="entry name" value="COMPLEX1_49K"/>
    <property type="match status" value="1"/>
</dbReference>
<keyword id="KW-0004">4Fe-4S</keyword>
<keyword id="KW-0249">Electron transport</keyword>
<keyword id="KW-0408">Iron</keyword>
<keyword id="KW-0411">Iron-sulfur</keyword>
<keyword id="KW-0479">Metal-binding</keyword>
<keyword id="KW-0496">Mitochondrion</keyword>
<keyword id="KW-0520">NAD</keyword>
<keyword id="KW-0560">Oxidoreductase</keyword>
<keyword id="KW-0679">Respiratory chain</keyword>
<keyword id="KW-1278">Translocase</keyword>
<keyword id="KW-0813">Transport</keyword>
<keyword id="KW-0830">Ubiquinone</keyword>
<geneLocation type="mitochondrion"/>
<organism>
    <name type="scientific">Nephroselmis olivacea</name>
    <name type="common">Green alga</name>
    <dbReference type="NCBI Taxonomy" id="31312"/>
    <lineage>
        <taxon>Eukaryota</taxon>
        <taxon>Viridiplantae</taxon>
        <taxon>Chlorophyta</taxon>
        <taxon>Nephroselmidophyceae</taxon>
        <taxon>Nephroselmidales</taxon>
        <taxon>Nephroselmidaceae</taxon>
        <taxon>Nephroselmis</taxon>
    </lineage>
</organism>